<organism evidence="9">
    <name type="scientific">Plasmodium falciparum (isolate 3D7)</name>
    <dbReference type="NCBI Taxonomy" id="36329"/>
    <lineage>
        <taxon>Eukaryota</taxon>
        <taxon>Sar</taxon>
        <taxon>Alveolata</taxon>
        <taxon>Apicomplexa</taxon>
        <taxon>Aconoidasida</taxon>
        <taxon>Haemosporida</taxon>
        <taxon>Plasmodiidae</taxon>
        <taxon>Plasmodium</taxon>
        <taxon>Plasmodium (Laverania)</taxon>
    </lineage>
</organism>
<gene>
    <name evidence="6" type="primary">CS</name>
    <name evidence="4" type="synonym">AROC</name>
    <name evidence="8" type="ORF">PF3D7_0623000</name>
</gene>
<comment type="function">
    <text evidence="2 3">Bifunctional chorismate synthase and flavin reductase (PubMed:31381947). Catalyzes the conversion of 5-enolpyruvylshikimate 3-phosphate (EPSP) to form chorismate (PubMed:11298276, PubMed:31381947). Acts also as a flavin reductase (FR) able to generate reduced flavin mononucleotide in the presence of NADPH (PubMed:31381947).</text>
</comment>
<comment type="catalytic activity">
    <reaction evidence="2 3">
        <text>5-O-(1-carboxyvinyl)-3-phosphoshikimate = chorismate + phosphate</text>
        <dbReference type="Rhea" id="RHEA:21020"/>
        <dbReference type="ChEBI" id="CHEBI:29748"/>
        <dbReference type="ChEBI" id="CHEBI:43474"/>
        <dbReference type="ChEBI" id="CHEBI:57701"/>
        <dbReference type="EC" id="4.2.3.5"/>
    </reaction>
    <physiologicalReaction direction="left-to-right" evidence="6">
        <dbReference type="Rhea" id="RHEA:21021"/>
    </physiologicalReaction>
</comment>
<comment type="catalytic activity">
    <reaction evidence="3">
        <text>FMNH2 + NADP(+) = FMN + NADPH + 2 H(+)</text>
        <dbReference type="Rhea" id="RHEA:21624"/>
        <dbReference type="ChEBI" id="CHEBI:15378"/>
        <dbReference type="ChEBI" id="CHEBI:57618"/>
        <dbReference type="ChEBI" id="CHEBI:57783"/>
        <dbReference type="ChEBI" id="CHEBI:58210"/>
        <dbReference type="ChEBI" id="CHEBI:58349"/>
        <dbReference type="EC" id="1.5.1.38"/>
    </reaction>
    <physiologicalReaction direction="right-to-left" evidence="6">
        <dbReference type="Rhea" id="RHEA:21626"/>
    </physiologicalReaction>
</comment>
<comment type="pathway">
    <text evidence="1">Metabolic intermediate biosynthesis; chorismate biosynthesis; chorismate from D-erythrose 4-phosphate and phosphoenolpyruvate: step 7/7.</text>
</comment>
<comment type="subcellular location">
    <subcellularLocation>
        <location evidence="2">Cytoplasm</location>
        <location evidence="2">Cytosol</location>
    </subcellularLocation>
</comment>
<comment type="developmental stage">
    <text evidence="2">Expressed in ring, trophozoite and schizont stages (at protein level).</text>
</comment>
<comment type="similarity">
    <text evidence="6">Belongs to the chorismate synthase family.</text>
</comment>
<comment type="caution">
    <text evidence="2 3">In one study, the enzyme was described as monofunctional, lacking flavin reductase activity (PubMed:11298276). However, in the later study, bifunctional nature of the enzyme was confirmed (PubMed:31381947).</text>
</comment>
<dbReference type="EC" id="1.5.1.38" evidence="7"/>
<dbReference type="EC" id="4.2.3.5" evidence="2 3"/>
<dbReference type="EMBL" id="AL844505">
    <property type="protein sequence ID" value="CAG25042.1"/>
    <property type="molecule type" value="Genomic_DNA"/>
</dbReference>
<dbReference type="RefSeq" id="XP_966212.1">
    <property type="nucleotide sequence ID" value="XM_961119.1"/>
</dbReference>
<dbReference type="SMR" id="C6KT66"/>
<dbReference type="FunCoup" id="C6KT66">
    <property type="interactions" value="47"/>
</dbReference>
<dbReference type="STRING" id="36329.C6KT66"/>
<dbReference type="PaxDb" id="5833-PFF1105c"/>
<dbReference type="EnsemblProtists" id="CAG25042">
    <property type="protein sequence ID" value="CAG25042"/>
    <property type="gene ID" value="PF3D7_0623000"/>
</dbReference>
<dbReference type="GeneID" id="3885860"/>
<dbReference type="KEGG" id="pfa:PF3D7_0623000"/>
<dbReference type="VEuPathDB" id="PlasmoDB:PF3D7_0623000"/>
<dbReference type="HOGENOM" id="CLU_034547_1_0_1"/>
<dbReference type="InParanoid" id="C6KT66"/>
<dbReference type="OMA" id="MLSINAV"/>
<dbReference type="OrthoDB" id="1721239at2759"/>
<dbReference type="PhylomeDB" id="C6KT66"/>
<dbReference type="UniPathway" id="UPA00053">
    <property type="reaction ID" value="UER00090"/>
</dbReference>
<dbReference type="Proteomes" id="UP000001450">
    <property type="component" value="Chromosome 6"/>
</dbReference>
<dbReference type="GO" id="GO:0005829">
    <property type="term" value="C:cytosol"/>
    <property type="evidence" value="ECO:0000314"/>
    <property type="project" value="GeneDB"/>
</dbReference>
<dbReference type="GO" id="GO:0004107">
    <property type="term" value="F:chorismate synthase activity"/>
    <property type="evidence" value="ECO:0000314"/>
    <property type="project" value="GeneDB"/>
</dbReference>
<dbReference type="GO" id="GO:0010181">
    <property type="term" value="F:FMN binding"/>
    <property type="evidence" value="ECO:0000314"/>
    <property type="project" value="GeneDB"/>
</dbReference>
<dbReference type="GO" id="GO:0008652">
    <property type="term" value="P:amino acid biosynthetic process"/>
    <property type="evidence" value="ECO:0007669"/>
    <property type="project" value="UniProtKB-KW"/>
</dbReference>
<dbReference type="GO" id="GO:0009073">
    <property type="term" value="P:aromatic amino acid family biosynthetic process"/>
    <property type="evidence" value="ECO:0000318"/>
    <property type="project" value="GO_Central"/>
</dbReference>
<dbReference type="GO" id="GO:0009423">
    <property type="term" value="P:chorismate biosynthetic process"/>
    <property type="evidence" value="ECO:0000314"/>
    <property type="project" value="GeneDB"/>
</dbReference>
<dbReference type="CDD" id="cd07304">
    <property type="entry name" value="Chorismate_synthase"/>
    <property type="match status" value="1"/>
</dbReference>
<dbReference type="FunFam" id="3.60.150.10:FF:000005">
    <property type="entry name" value="Chorismate synthase"/>
    <property type="match status" value="1"/>
</dbReference>
<dbReference type="FunFam" id="3.60.150.10:FF:000007">
    <property type="entry name" value="Chorismate synthase"/>
    <property type="match status" value="1"/>
</dbReference>
<dbReference type="FunFam" id="3.60.150.10:FF:000008">
    <property type="entry name" value="Chorismate synthase"/>
    <property type="match status" value="1"/>
</dbReference>
<dbReference type="Gene3D" id="3.60.150.10">
    <property type="entry name" value="Chorismate synthase AroC"/>
    <property type="match status" value="3"/>
</dbReference>
<dbReference type="HAMAP" id="MF_00300">
    <property type="entry name" value="Chorismate_synth"/>
    <property type="match status" value="1"/>
</dbReference>
<dbReference type="InterPro" id="IPR000453">
    <property type="entry name" value="Chorismate_synth"/>
</dbReference>
<dbReference type="InterPro" id="IPR035904">
    <property type="entry name" value="Chorismate_synth_AroC_sf"/>
</dbReference>
<dbReference type="PANTHER" id="PTHR21085">
    <property type="entry name" value="CHORISMATE SYNTHASE"/>
    <property type="match status" value="1"/>
</dbReference>
<dbReference type="PANTHER" id="PTHR21085:SF0">
    <property type="entry name" value="CHORISMATE SYNTHASE"/>
    <property type="match status" value="1"/>
</dbReference>
<dbReference type="Pfam" id="PF01264">
    <property type="entry name" value="Chorismate_synt"/>
    <property type="match status" value="2"/>
</dbReference>
<dbReference type="SUPFAM" id="SSF103263">
    <property type="entry name" value="Chorismate synthase, AroC"/>
    <property type="match status" value="2"/>
</dbReference>
<protein>
    <recommendedName>
        <fullName evidence="4 5">Chorismate synthase</fullName>
        <shortName evidence="4">PfCS</shortName>
        <ecNumber evidence="7">1.5.1.38</ecNumber>
        <ecNumber evidence="2 3">4.2.3.5</ecNumber>
    </recommendedName>
</protein>
<feature type="chain" id="PRO_0000462309" description="Chorismate synthase">
    <location>
        <begin position="1"/>
        <end position="527"/>
    </location>
</feature>
<feature type="active site" evidence="1">
    <location>
        <position position="17"/>
    </location>
</feature>
<feature type="active site" evidence="1">
    <location>
        <position position="104"/>
    </location>
</feature>
<feature type="active site" evidence="1">
    <location>
        <position position="485"/>
    </location>
</feature>
<keyword id="KW-0028">Amino-acid biosynthesis</keyword>
<keyword id="KW-0057">Aromatic amino acid biosynthesis</keyword>
<keyword id="KW-0963">Cytoplasm</keyword>
<keyword id="KW-0456">Lyase</keyword>
<keyword id="KW-0560">Oxidoreductase</keyword>
<keyword id="KW-1185">Reference proteome</keyword>
<reference evidence="9" key="1">
    <citation type="journal article" date="2002" name="Nature">
        <title>Genome sequence of the human malaria parasite Plasmodium falciparum.</title>
        <authorList>
            <person name="Gardner M.J."/>
            <person name="Hall N."/>
            <person name="Fung E."/>
            <person name="White O."/>
            <person name="Berriman M."/>
            <person name="Hyman R.W."/>
            <person name="Carlton J.M."/>
            <person name="Pain A."/>
            <person name="Nelson K.E."/>
            <person name="Bowman S."/>
            <person name="Paulsen I.T."/>
            <person name="James K.D."/>
            <person name="Eisen J.A."/>
            <person name="Rutherford K.M."/>
            <person name="Salzberg S.L."/>
            <person name="Craig A."/>
            <person name="Kyes S."/>
            <person name="Chan M.-S."/>
            <person name="Nene V."/>
            <person name="Shallom S.J."/>
            <person name="Suh B."/>
            <person name="Peterson J."/>
            <person name="Angiuoli S."/>
            <person name="Pertea M."/>
            <person name="Allen J."/>
            <person name="Selengut J."/>
            <person name="Haft D."/>
            <person name="Mather M.W."/>
            <person name="Vaidya A.B."/>
            <person name="Martin D.M.A."/>
            <person name="Fairlamb A.H."/>
            <person name="Fraunholz M.J."/>
            <person name="Roos D.S."/>
            <person name="Ralph S.A."/>
            <person name="McFadden G.I."/>
            <person name="Cummings L.M."/>
            <person name="Subramanian G.M."/>
            <person name="Mungall C."/>
            <person name="Venter J.C."/>
            <person name="Carucci D.J."/>
            <person name="Hoffman S.L."/>
            <person name="Newbold C."/>
            <person name="Davis R.W."/>
            <person name="Fraser C.M."/>
            <person name="Barrell B.G."/>
        </authorList>
    </citation>
    <scope>NUCLEOTIDE SEQUENCE [LARGE SCALE GENOMIC DNA]</scope>
    <source>
        <strain evidence="9">3D7</strain>
    </source>
</reference>
<reference evidence="9" key="2">
    <citation type="journal article" date="2002" name="Nature">
        <title>Sequence of Plasmodium falciparum chromosomes 1, 3-9 and 13.</title>
        <authorList>
            <person name="Hall N."/>
            <person name="Pain A."/>
            <person name="Berriman M."/>
            <person name="Churcher C.M."/>
            <person name="Harris B."/>
            <person name="Harris D."/>
            <person name="Mungall K.L."/>
            <person name="Bowman S."/>
            <person name="Atkin R."/>
            <person name="Baker S."/>
            <person name="Barron A."/>
            <person name="Brooks K."/>
            <person name="Buckee C.O."/>
            <person name="Burrows C."/>
            <person name="Cherevach I."/>
            <person name="Chillingworth C."/>
            <person name="Chillingworth T."/>
            <person name="Christodoulou Z."/>
            <person name="Clark L."/>
            <person name="Clark R."/>
            <person name="Corton C."/>
            <person name="Cronin A."/>
            <person name="Davies R.M."/>
            <person name="Davis P."/>
            <person name="Dear P."/>
            <person name="Dearden F."/>
            <person name="Doggett J."/>
            <person name="Feltwell T."/>
            <person name="Goble A."/>
            <person name="Goodhead I."/>
            <person name="Gwilliam R."/>
            <person name="Hamlin N."/>
            <person name="Hance Z."/>
            <person name="Harper D."/>
            <person name="Hauser H."/>
            <person name="Hornsby T."/>
            <person name="Holroyd S."/>
            <person name="Horrocks P."/>
            <person name="Humphray S."/>
            <person name="Jagels K."/>
            <person name="James K.D."/>
            <person name="Johnson D."/>
            <person name="Kerhornou A."/>
            <person name="Knights A."/>
            <person name="Konfortov B."/>
            <person name="Kyes S."/>
            <person name="Larke N."/>
            <person name="Lawson D."/>
            <person name="Lennard N."/>
            <person name="Line A."/>
            <person name="Maddison M."/>
            <person name="Mclean J."/>
            <person name="Mooney P."/>
            <person name="Moule S."/>
            <person name="Murphy L."/>
            <person name="Oliver K."/>
            <person name="Ormond D."/>
            <person name="Price C."/>
            <person name="Quail M.A."/>
            <person name="Rabbinowitsch E."/>
            <person name="Rajandream M.A."/>
            <person name="Rutter S."/>
            <person name="Rutherford K.M."/>
            <person name="Sanders M."/>
            <person name="Simmonds M."/>
            <person name="Seeger K."/>
            <person name="Sharp S."/>
            <person name="Smith R."/>
            <person name="Squares R."/>
            <person name="Squares S."/>
            <person name="Stevens K."/>
            <person name="Taylor K."/>
            <person name="Tivey A."/>
            <person name="Unwin L."/>
            <person name="Whitehead S."/>
            <person name="Woodward J.R."/>
            <person name="Sulston J.E."/>
            <person name="Craig A."/>
            <person name="Newbold C."/>
            <person name="Barrell B.G."/>
        </authorList>
    </citation>
    <scope>NUCLEOTIDE SEQUENCE [LARGE SCALE GENOMIC DNA]</scope>
    <source>
        <strain evidence="9">3D7</strain>
    </source>
</reference>
<reference evidence="6" key="3">
    <citation type="journal article" date="2001" name="Mol. Microbiol.">
        <title>Subcellular localization and characterization of chorismate synthase in the apicomplexan Plasmodium falciparum.</title>
        <authorList>
            <person name="Fitzpatrick T."/>
            <person name="Ricken S."/>
            <person name="Lanzer M."/>
            <person name="Amrhein N."/>
            <person name="Macheroux P."/>
            <person name="Kappes B."/>
        </authorList>
    </citation>
    <scope>FUNCTION</scope>
    <scope>CATALYTIC ACTIVITY</scope>
    <scope>SUBCELLULAR LOCATION</scope>
    <scope>DEVELOPMENTAL STAGE</scope>
    <source>
        <strain evidence="4">DD2</strain>
    </source>
</reference>
<reference evidence="6" key="4">
    <citation type="journal article" date="2019" name="Mol. Biochem. Parasitol.">
        <title>Chorismate synthase from malaria parasites is bifunctional enzyme.</title>
        <authorList>
            <person name="Khera H.K."/>
            <person name="Singh S.K."/>
            <person name="Singh S."/>
        </authorList>
    </citation>
    <scope>FUNCTION</scope>
    <scope>CATALYTIC ACTIVITY</scope>
</reference>
<accession>C6KT66</accession>
<name>AROC_PLAF7</name>
<proteinExistence type="evidence at protein level"/>
<sequence>MSTYGTLLKVTSYGESHGKAIGCVIDGFLSNIEINFDLIQKQLDRRRPNQSKLTSNRNEKDKLVILSGFDENKTLGTPITFLIYNEDIKKEDYNSFINIPRPGHGDYTYFMKYHVKNKSGSSRFSGRETATRVAAGACIEQWLYKSYNCSIVSYVHSVGNIKIPEQVSKELENKNPPSRDLVDSYGTVRYNEKEKIFMDCFNRIYDMNASMLKTDEYNKNTLTIPSIDNTYINVKTNECNINQVDNNHNNYINDKDNTFNNSEKSDEWIYLQTRCPHPYTAVQICSYILKLKNKGDSVGGIATCIIQNPPIGIGEPIFDKLEAELAKMILSIPAVKGIEFGSGFNGTYMFGSMHNDIFIPVENMSTKKESDLLYDDKGECKNMSYHSTIQNNEDQILNSTKGFMPPKNDKNFNNIDDYNVTFNNNEEKLLITKTNNCGGILAGISTGNNIVFRSAIKPVSSIQIEKETSDFYGNMCNLKVQGRHDSCILPRLPPIIEASSSMVIGDLILRQISKYGDKKLPTLFRNM</sequence>
<evidence type="ECO:0000250" key="1">
    <source>
        <dbReference type="UniProtKB" id="Q12640"/>
    </source>
</evidence>
<evidence type="ECO:0000269" key="2">
    <source>
    </source>
</evidence>
<evidence type="ECO:0000269" key="3">
    <source>
    </source>
</evidence>
<evidence type="ECO:0000303" key="4">
    <source>
    </source>
</evidence>
<evidence type="ECO:0000303" key="5">
    <source>
    </source>
</evidence>
<evidence type="ECO:0000305" key="6"/>
<evidence type="ECO:0000305" key="7">
    <source>
    </source>
</evidence>
<evidence type="ECO:0000312" key="8">
    <source>
        <dbReference type="EMBL" id="CAG25042.1"/>
    </source>
</evidence>
<evidence type="ECO:0000312" key="9">
    <source>
        <dbReference type="Proteomes" id="UP000001450"/>
    </source>
</evidence>